<feature type="chain" id="PRO_0000061045" description="Cytochrome b">
    <location>
        <begin position="1"/>
        <end position="380"/>
    </location>
</feature>
<feature type="transmembrane region" description="Helical" evidence="2">
    <location>
        <begin position="33"/>
        <end position="53"/>
    </location>
</feature>
<feature type="transmembrane region" description="Helical" evidence="2">
    <location>
        <begin position="77"/>
        <end position="98"/>
    </location>
</feature>
<feature type="transmembrane region" description="Helical" evidence="2">
    <location>
        <begin position="113"/>
        <end position="133"/>
    </location>
</feature>
<feature type="transmembrane region" description="Helical" evidence="2">
    <location>
        <begin position="178"/>
        <end position="198"/>
    </location>
</feature>
<feature type="transmembrane region" description="Helical" evidence="2">
    <location>
        <begin position="226"/>
        <end position="246"/>
    </location>
</feature>
<feature type="transmembrane region" description="Helical" evidence="2">
    <location>
        <begin position="288"/>
        <end position="308"/>
    </location>
</feature>
<feature type="transmembrane region" description="Helical" evidence="2">
    <location>
        <begin position="320"/>
        <end position="340"/>
    </location>
</feature>
<feature type="transmembrane region" description="Helical" evidence="2">
    <location>
        <begin position="347"/>
        <end position="367"/>
    </location>
</feature>
<feature type="binding site" description="axial binding residue" evidence="2">
    <location>
        <position position="83"/>
    </location>
    <ligand>
        <name>heme b</name>
        <dbReference type="ChEBI" id="CHEBI:60344"/>
        <label>b562</label>
    </ligand>
    <ligandPart>
        <name>Fe</name>
        <dbReference type="ChEBI" id="CHEBI:18248"/>
    </ligandPart>
</feature>
<feature type="binding site" description="axial binding residue" evidence="2">
    <location>
        <position position="97"/>
    </location>
    <ligand>
        <name>heme b</name>
        <dbReference type="ChEBI" id="CHEBI:60344"/>
        <label>b566</label>
    </ligand>
    <ligandPart>
        <name>Fe</name>
        <dbReference type="ChEBI" id="CHEBI:18248"/>
    </ligandPart>
</feature>
<feature type="binding site" description="axial binding residue" evidence="2">
    <location>
        <position position="182"/>
    </location>
    <ligand>
        <name>heme b</name>
        <dbReference type="ChEBI" id="CHEBI:60344"/>
        <label>b562</label>
    </ligand>
    <ligandPart>
        <name>Fe</name>
        <dbReference type="ChEBI" id="CHEBI:18248"/>
    </ligandPart>
</feature>
<feature type="binding site" description="axial binding residue" evidence="2">
    <location>
        <position position="196"/>
    </location>
    <ligand>
        <name>heme b</name>
        <dbReference type="ChEBI" id="CHEBI:60344"/>
        <label>b566</label>
    </ligand>
    <ligandPart>
        <name>Fe</name>
        <dbReference type="ChEBI" id="CHEBI:18248"/>
    </ligandPart>
</feature>
<feature type="binding site" evidence="2">
    <location>
        <position position="201"/>
    </location>
    <ligand>
        <name>a ubiquinone</name>
        <dbReference type="ChEBI" id="CHEBI:16389"/>
    </ligand>
</feature>
<feature type="sequence variant" id="VAR_008585" description="In dbSNP:rs193302980." evidence="5 9 11 14 17 18 19 23">
    <original>T</original>
    <variation>I</variation>
    <location>
        <position position="7"/>
    </location>
</feature>
<feature type="sequence variant" id="VAR_013643" description="In dbSNP:rs28357679." evidence="5 9 11">
    <original>N</original>
    <variation>S</variation>
    <location>
        <position position="8"/>
    </location>
</feature>
<feature type="sequence variant" id="VAR_013644" description="In dbSNP:rs28357681." evidence="5 9 11">
    <original>F</original>
    <variation>L</variation>
    <location>
        <position position="18"/>
    </location>
</feature>
<feature type="sequence variant" id="VAR_013645" description="In mitochondrial myopathy; sporadic; dbSNP:rs207459998." evidence="6">
    <original>G</original>
    <variation>S</variation>
    <location>
        <position position="34"/>
    </location>
</feature>
<feature type="sequence variant" id="VAR_033058" description="In exercice intolerance; with cardiomyopathy and septo-optic dysplasia; dbSNP:rs207460004." evidence="13">
    <original>S</original>
    <variation>P</variation>
    <location>
        <position position="35"/>
    </location>
</feature>
<feature type="sequence variant" id="VAR_015571" description="In dbSNP:rs2853505." evidence="14">
    <original>A</original>
    <variation>T</variation>
    <location>
        <position position="39"/>
    </location>
</feature>
<feature type="sequence variant" id="VAR_013646" description="In dbSNP:rs1603224933." evidence="9">
    <original>A</original>
    <variation>V</variation>
    <location>
        <position position="39"/>
    </location>
</feature>
<feature type="sequence variant" id="VAR_013647" description="In dbSNP:rs200786872." evidence="9">
    <original>I</original>
    <variation>T</variation>
    <location>
        <position position="78"/>
    </location>
</feature>
<feature type="sequence variant" id="VAR_015572" description="In dbSNP:rs199997767." evidence="14">
    <original>I</original>
    <variation>V</variation>
    <location>
        <position position="78"/>
    </location>
</feature>
<feature type="sequence variant" id="VAR_008388" description="In colorectal cancer; dbSNP:rs207459995." evidence="21">
    <original>R</original>
    <variation>H</variation>
    <location>
        <position position="80"/>
    </location>
</feature>
<feature type="sequence variant" id="VAR_008586" description="In dbSNP:rs1603225017." evidence="17">
    <original>A</original>
    <variation>P</variation>
    <location>
        <position position="87"/>
    </location>
</feature>
<feature type="sequence variant" id="VAR_013648" description="In dbSNP:rs28357685." evidence="9 11">
    <original>A</original>
    <variation>T</variation>
    <location>
        <position position="122"/>
    </location>
</feature>
<feature type="sequence variant" id="VAR_013649" description="In dbSNP:rs1603225089." evidence="9">
    <original>T</original>
    <variation>A</variation>
    <location>
        <position position="123"/>
    </location>
</feature>
<feature type="sequence variant" id="VAR_013650" description="In exercise intolerance; dbSNP:rs207460001." evidence="10">
    <original>S</original>
    <variation>P</variation>
    <location>
        <position position="151"/>
    </location>
</feature>
<feature type="sequence variant" id="VAR_013651" description="In dbSNP:rs28357687." evidence="9">
    <original>I</original>
    <variation>T</variation>
    <location>
        <position position="153"/>
    </location>
</feature>
<feature type="sequence variant" id="VAR_013652" description="In dbSNP:rs386829239." evidence="11">
    <original>I</original>
    <variation>V</variation>
    <location>
        <position position="164"/>
    </location>
</feature>
<feature type="sequence variant" id="VAR_013653" description="In hyperthrophic cardiomyopathy; dbSNP:rs1603225167." evidence="5">
    <original>G</original>
    <variation>E</variation>
    <location>
        <position position="166"/>
    </location>
</feature>
<feature type="sequence variant" id="VAR_002197" description="In LHON; uncertain significance; secondary mutation; dbSNP:rs41518645." evidence="16">
    <original>D</original>
    <variation>N</variation>
    <location>
        <position position="171"/>
    </location>
</feature>
<feature type="sequence variant" id="VAR_013654" evidence="11">
    <original>IA</original>
    <variation>VT</variation>
    <location>
        <begin position="189"/>
        <end position="190"/>
    </location>
</feature>
<feature type="sequence variant" id="VAR_011339" description="In dbSNP:rs2853507." evidence="14 18">
    <original>A</original>
    <variation>T</variation>
    <location>
        <position position="191"/>
    </location>
</feature>
<feature type="sequence variant" id="VAR_011340" description="In dbSNP:rs2853508." evidence="5 9 11 14 18">
    <original>T</original>
    <variation>A</variation>
    <location>
        <position position="194"/>
    </location>
</feature>
<feature type="sequence variant" id="VAR_011341" description="In dbSNP:rs193302993." evidence="9 11 18">
    <original>A</original>
    <variation>T</variation>
    <location>
        <position position="229"/>
    </location>
</feature>
<feature type="sequence variant" id="VAR_013655" description="In dbSNP:rs193302994." evidence="5 9 11">
    <original>L</original>
    <variation>I</variation>
    <location>
        <position position="236"/>
    </location>
</feature>
<feature type="sequence variant" id="VAR_013657" description="In mitochondrial myopathy; sporadic." evidence="6">
    <location>
        <begin position="251"/>
        <end position="258"/>
    </location>
</feature>
<feature type="sequence variant" id="VAR_013656" description="In CMIH; dbSNP:rs207460003." evidence="7">
    <original>G</original>
    <variation>D</variation>
    <location>
        <position position="251"/>
    </location>
</feature>
<feature type="sequence variant" id="VAR_033059" description="Risk factor for obesity; dbSNP:rs199951903." evidence="15">
    <original>G</original>
    <variation>S</variation>
    <location>
        <position position="251"/>
    </location>
</feature>
<feature type="sequence variant" id="VAR_013658" description="Found in a patient with fatal post-partum cardiomyopathy; uncertain significance." evidence="19">
    <original>N</original>
    <variation>H</variation>
    <location>
        <position position="255"/>
    </location>
</feature>
<feature type="sequence variant" id="VAR_015573" description="In dbSNP:rs1603225331." evidence="14">
    <original>N</original>
    <variation>D</variation>
    <location>
        <position position="260"/>
    </location>
</feature>
<feature type="sequence variant" id="VAR_008389" description="In colorectal cancer; dbSNP:rs207459996." evidence="21">
    <original>F</original>
    <variation>L</variation>
    <location>
        <position position="276"/>
    </location>
</feature>
<feature type="sequence variant" id="VAR_013659" description="In multisystem disorder; dbSNP:rs207460002." evidence="12">
    <original>Y</original>
    <variation>C</variation>
    <location>
        <position position="278"/>
    </location>
</feature>
<feature type="sequence variant" id="VAR_013660" description="In exercise intolerance; dbSNP:rs207459997." evidence="20">
    <original>G</original>
    <variation>D</variation>
    <location>
        <position position="290"/>
    </location>
</feature>
<feature type="sequence variant" id="VAR_013661" description="In dbSNP:rs369851331." evidence="9">
    <original>I</original>
    <variation>T</variation>
    <location>
        <position position="306"/>
    </location>
</feature>
<feature type="sequence variant" id="VAR_013662" description="In dbSNP:rs200975632." evidence="5">
    <original>M</original>
    <variation>T</variation>
    <location>
        <position position="316"/>
    </location>
</feature>
<feature type="sequence variant" id="VAR_013663" description="In dbSNP:rs1556424652." evidence="9">
    <original>A</original>
    <variation>T</variation>
    <location>
        <position position="329"/>
    </location>
</feature>
<feature type="sequence variant" id="VAR_013664" description="In dbSNP:rs386829259." evidence="11">
    <original>A</original>
    <variation>T</variation>
    <location>
        <position position="330"/>
    </location>
</feature>
<feature type="sequence variant" id="VAR_013665" description="In dbSNP:rs386829260." evidence="9">
    <original>I</original>
    <variation>V</variation>
    <location>
        <position position="334"/>
    </location>
</feature>
<feature type="sequence variant" id="VAR_002198" description="In mitochondrial myopathy." evidence="22">
    <original>G</original>
    <variation>E</variation>
    <location>
        <position position="339"/>
    </location>
</feature>
<feature type="sequence variant" id="VAR_013666" description="In dbSNP:rs1603225508." evidence="9">
    <original>V</original>
    <variation>M</variation>
    <location>
        <position position="353"/>
    </location>
</feature>
<feature type="sequence variant" id="VAR_002199" description="In LHON; secondary mutation; does not seem to directly cause the disease; dbSNP:rs200336777." evidence="9 16">
    <original>V</original>
    <variation>M</variation>
    <location>
        <position position="356"/>
    </location>
</feature>
<feature type="sequence variant" id="VAR_013667" description="In dbSNP:rs28357376." evidence="11">
    <original>T</original>
    <variation>A</variation>
    <location>
        <position position="360"/>
    </location>
</feature>
<feature type="sequence variant" id="VAR_013668" description="In dbSNP:rs202225494." evidence="9 11">
    <original>T</original>
    <variation>I</variation>
    <location>
        <position position="368"/>
    </location>
</feature>
<feature type="helix" evidence="24">
    <location>
        <begin position="4"/>
        <end position="7"/>
    </location>
</feature>
<feature type="helix" evidence="24">
    <location>
        <begin position="9"/>
        <end position="17"/>
    </location>
</feature>
<feature type="strand" evidence="24">
    <location>
        <begin position="22"/>
        <end position="24"/>
    </location>
</feature>
<feature type="helix" evidence="24">
    <location>
        <begin position="29"/>
        <end position="31"/>
    </location>
</feature>
<feature type="helix" evidence="24">
    <location>
        <begin position="32"/>
        <end position="52"/>
    </location>
</feature>
<feature type="helix" evidence="24">
    <location>
        <begin position="61"/>
        <end position="70"/>
    </location>
</feature>
<feature type="helix" evidence="24">
    <location>
        <begin position="76"/>
        <end position="103"/>
    </location>
</feature>
<feature type="helix" evidence="24">
    <location>
        <begin position="106"/>
        <end position="108"/>
    </location>
</feature>
<feature type="helix" evidence="24">
    <location>
        <begin position="110"/>
        <end position="131"/>
    </location>
</feature>
<feature type="turn" evidence="24">
    <location>
        <begin position="132"/>
        <end position="134"/>
    </location>
</feature>
<feature type="helix" evidence="24">
    <location>
        <begin position="137"/>
        <end position="148"/>
    </location>
</feature>
<feature type="helix" evidence="24">
    <location>
        <begin position="149"/>
        <end position="152"/>
    </location>
</feature>
<feature type="turn" evidence="24">
    <location>
        <begin position="154"/>
        <end position="156"/>
    </location>
</feature>
<feature type="helix" evidence="24">
    <location>
        <begin position="157"/>
        <end position="165"/>
    </location>
</feature>
<feature type="strand" evidence="24">
    <location>
        <begin position="167"/>
        <end position="170"/>
    </location>
</feature>
<feature type="helix" evidence="24">
    <location>
        <begin position="172"/>
        <end position="200"/>
    </location>
</feature>
<feature type="turn" evidence="24">
    <location>
        <begin position="201"/>
        <end position="203"/>
    </location>
</feature>
<feature type="helix" evidence="24">
    <location>
        <begin position="214"/>
        <end position="216"/>
    </location>
</feature>
<feature type="strand" evidence="24">
    <location>
        <begin position="217"/>
        <end position="219"/>
    </location>
</feature>
<feature type="helix" evidence="24">
    <location>
        <begin position="220"/>
        <end position="244"/>
    </location>
</feature>
<feature type="strand" evidence="24">
    <location>
        <begin position="249"/>
        <end position="251"/>
    </location>
</feature>
<feature type="strand" evidence="24">
    <location>
        <begin position="255"/>
        <end position="258"/>
    </location>
</feature>
<feature type="helix" evidence="24">
    <location>
        <begin position="272"/>
        <end position="283"/>
    </location>
</feature>
<feature type="strand" evidence="24">
    <location>
        <begin position="284"/>
        <end position="286"/>
    </location>
</feature>
<feature type="helix" evidence="24">
    <location>
        <begin position="289"/>
        <end position="303"/>
    </location>
</feature>
<feature type="helix" evidence="24">
    <location>
        <begin position="304"/>
        <end position="307"/>
    </location>
</feature>
<feature type="helix" evidence="24">
    <location>
        <begin position="315"/>
        <end position="317"/>
    </location>
</feature>
<feature type="helix" evidence="24">
    <location>
        <begin position="319"/>
        <end position="339"/>
    </location>
</feature>
<feature type="helix" evidence="24">
    <location>
        <begin position="345"/>
        <end position="363"/>
    </location>
</feature>
<feature type="helix" evidence="24">
    <location>
        <begin position="365"/>
        <end position="376"/>
    </location>
</feature>
<gene>
    <name type="primary">MT-CYB</name>
    <name type="synonym">COB</name>
    <name type="synonym">CYTB</name>
    <name type="synonym">MTCYB</name>
</gene>
<organism>
    <name type="scientific">Homo sapiens</name>
    <name type="common">Human</name>
    <dbReference type="NCBI Taxonomy" id="9606"/>
    <lineage>
        <taxon>Eukaryota</taxon>
        <taxon>Metazoa</taxon>
        <taxon>Chordata</taxon>
        <taxon>Craniata</taxon>
        <taxon>Vertebrata</taxon>
        <taxon>Euteleostomi</taxon>
        <taxon>Mammalia</taxon>
        <taxon>Eutheria</taxon>
        <taxon>Euarchontoglires</taxon>
        <taxon>Primates</taxon>
        <taxon>Haplorrhini</taxon>
        <taxon>Catarrhini</taxon>
        <taxon>Hominidae</taxon>
        <taxon>Homo</taxon>
    </lineage>
</organism>
<dbReference type="EMBL" id="V00662">
    <property type="protein sequence ID" value="CAA24038.1"/>
    <property type="molecule type" value="Genomic_DNA"/>
</dbReference>
<dbReference type="EMBL" id="J01415">
    <property type="protein sequence ID" value="AAB58955.3"/>
    <property type="molecule type" value="Genomic_DNA"/>
</dbReference>
<dbReference type="EMBL" id="U09500">
    <property type="protein sequence ID" value="AAA19775.1"/>
    <property type="molecule type" value="Genomic_DNA"/>
</dbReference>
<dbReference type="EMBL" id="D38112">
    <property type="protein sequence ID" value="BAA77674.1"/>
    <property type="molecule type" value="Genomic_DNA"/>
</dbReference>
<dbReference type="EMBL" id="AF346963">
    <property type="protein sequence ID" value="AAK17219.1"/>
    <property type="molecule type" value="Genomic_DNA"/>
</dbReference>
<dbReference type="EMBL" id="AF346964">
    <property type="protein sequence ID" value="AAK17232.2"/>
    <property type="molecule type" value="Genomic_DNA"/>
</dbReference>
<dbReference type="EMBL" id="AF346965">
    <property type="protein sequence ID" value="AAK17245.2"/>
    <property type="molecule type" value="Genomic_DNA"/>
</dbReference>
<dbReference type="EMBL" id="AF346966">
    <property type="protein sequence ID" value="AAK17258.1"/>
    <property type="molecule type" value="Genomic_DNA"/>
</dbReference>
<dbReference type="EMBL" id="AF346967">
    <property type="protein sequence ID" value="AAK17271.2"/>
    <property type="molecule type" value="Genomic_DNA"/>
</dbReference>
<dbReference type="EMBL" id="AF346968">
    <property type="protein sequence ID" value="AAK17284.2"/>
    <property type="molecule type" value="Genomic_DNA"/>
</dbReference>
<dbReference type="EMBL" id="AF346969">
    <property type="protein sequence ID" value="AAK17297.2"/>
    <property type="molecule type" value="Genomic_DNA"/>
</dbReference>
<dbReference type="EMBL" id="AF346970">
    <property type="protein sequence ID" value="AAK17310.2"/>
    <property type="molecule type" value="Genomic_DNA"/>
</dbReference>
<dbReference type="EMBL" id="AF346971">
    <property type="protein sequence ID" value="AAK17323.2"/>
    <property type="molecule type" value="Genomic_DNA"/>
</dbReference>
<dbReference type="EMBL" id="AF346972">
    <property type="protein sequence ID" value="AAK17336.2"/>
    <property type="molecule type" value="Genomic_DNA"/>
</dbReference>
<dbReference type="EMBL" id="AF346973">
    <property type="protein sequence ID" value="AAK17349.2"/>
    <property type="molecule type" value="Genomic_DNA"/>
</dbReference>
<dbReference type="EMBL" id="AF346974">
    <property type="protein sequence ID" value="AAK17362.2"/>
    <property type="molecule type" value="Genomic_DNA"/>
</dbReference>
<dbReference type="EMBL" id="AF346975">
    <property type="protein sequence ID" value="AAK17375.2"/>
    <property type="molecule type" value="Genomic_DNA"/>
</dbReference>
<dbReference type="EMBL" id="AF346976">
    <property type="protein sequence ID" value="AAK17388.1"/>
    <property type="molecule type" value="Genomic_DNA"/>
</dbReference>
<dbReference type="EMBL" id="AF346977">
    <property type="protein sequence ID" value="AAK17401.1"/>
    <property type="molecule type" value="Genomic_DNA"/>
</dbReference>
<dbReference type="EMBL" id="AF346978">
    <property type="protein sequence ID" value="AAK17414.1"/>
    <property type="molecule type" value="Genomic_DNA"/>
</dbReference>
<dbReference type="EMBL" id="AF346979">
    <property type="protein sequence ID" value="AAK17427.1"/>
    <property type="molecule type" value="Genomic_DNA"/>
</dbReference>
<dbReference type="EMBL" id="AF346980">
    <property type="protein sequence ID" value="AAK17440.2"/>
    <property type="molecule type" value="Genomic_DNA"/>
</dbReference>
<dbReference type="EMBL" id="AF346981">
    <property type="protein sequence ID" value="AAK17453.2"/>
    <property type="molecule type" value="Genomic_DNA"/>
</dbReference>
<dbReference type="EMBL" id="AF346982">
    <property type="protein sequence ID" value="AAK17466.1"/>
    <property type="molecule type" value="Genomic_DNA"/>
</dbReference>
<dbReference type="EMBL" id="AF346983">
    <property type="protein sequence ID" value="AAK17479.1"/>
    <property type="molecule type" value="Genomic_DNA"/>
</dbReference>
<dbReference type="EMBL" id="AF346984">
    <property type="protein sequence ID" value="AAK17492.2"/>
    <property type="molecule type" value="Genomic_DNA"/>
</dbReference>
<dbReference type="EMBL" id="AF346985">
    <property type="protein sequence ID" value="AAK17505.2"/>
    <property type="molecule type" value="Genomic_DNA"/>
</dbReference>
<dbReference type="EMBL" id="AF346986">
    <property type="protein sequence ID" value="AAK17518.2"/>
    <property type="molecule type" value="Genomic_DNA"/>
</dbReference>
<dbReference type="EMBL" id="AF346987">
    <property type="protein sequence ID" value="AAK17531.2"/>
    <property type="molecule type" value="Genomic_DNA"/>
</dbReference>
<dbReference type="EMBL" id="AF346988">
    <property type="protein sequence ID" value="AAK17544.1"/>
    <property type="molecule type" value="Genomic_DNA"/>
</dbReference>
<dbReference type="EMBL" id="AF346989">
    <property type="protein sequence ID" value="AAK17557.2"/>
    <property type="molecule type" value="Genomic_DNA"/>
</dbReference>
<dbReference type="EMBL" id="AF346990">
    <property type="protein sequence ID" value="AAK17570.1"/>
    <property type="molecule type" value="Genomic_DNA"/>
</dbReference>
<dbReference type="EMBL" id="AF346991">
    <property type="protein sequence ID" value="AAK17583.2"/>
    <property type="molecule type" value="Genomic_DNA"/>
</dbReference>
<dbReference type="EMBL" id="AF346992">
    <property type="protein sequence ID" value="AAK17596.2"/>
    <property type="molecule type" value="Genomic_DNA"/>
</dbReference>
<dbReference type="EMBL" id="AF346993">
    <property type="protein sequence ID" value="AAK17609.2"/>
    <property type="molecule type" value="Genomic_DNA"/>
</dbReference>
<dbReference type="EMBL" id="AF346994">
    <property type="protein sequence ID" value="AAK17622.2"/>
    <property type="molecule type" value="Genomic_DNA"/>
</dbReference>
<dbReference type="EMBL" id="AF346995">
    <property type="protein sequence ID" value="AAK17635.2"/>
    <property type="molecule type" value="Genomic_DNA"/>
</dbReference>
<dbReference type="EMBL" id="AF346996">
    <property type="protein sequence ID" value="AAK17648.2"/>
    <property type="molecule type" value="Genomic_DNA"/>
</dbReference>
<dbReference type="EMBL" id="AF346997">
    <property type="protein sequence ID" value="AAK17661.2"/>
    <property type="molecule type" value="Genomic_DNA"/>
</dbReference>
<dbReference type="EMBL" id="AF346998">
    <property type="protein sequence ID" value="AAK17674.2"/>
    <property type="molecule type" value="Genomic_DNA"/>
</dbReference>
<dbReference type="EMBL" id="AF346999">
    <property type="protein sequence ID" value="AAK17687.2"/>
    <property type="molecule type" value="Genomic_DNA"/>
</dbReference>
<dbReference type="EMBL" id="AF347000">
    <property type="protein sequence ID" value="AAK17700.1"/>
    <property type="molecule type" value="Genomic_DNA"/>
</dbReference>
<dbReference type="EMBL" id="AF347001">
    <property type="protein sequence ID" value="AAK17713.2"/>
    <property type="molecule type" value="Genomic_DNA"/>
</dbReference>
<dbReference type="EMBL" id="AF347002">
    <property type="protein sequence ID" value="AAK17726.2"/>
    <property type="molecule type" value="Genomic_DNA"/>
</dbReference>
<dbReference type="EMBL" id="AF347003">
    <property type="protein sequence ID" value="AAK17739.2"/>
    <property type="molecule type" value="Genomic_DNA"/>
</dbReference>
<dbReference type="EMBL" id="AF347004">
    <property type="protein sequence ID" value="AAK17752.2"/>
    <property type="molecule type" value="Genomic_DNA"/>
</dbReference>
<dbReference type="EMBL" id="AF347005">
    <property type="protein sequence ID" value="AAK17765.2"/>
    <property type="molecule type" value="Genomic_DNA"/>
</dbReference>
<dbReference type="EMBL" id="AF347006">
    <property type="protein sequence ID" value="AAK17778.2"/>
    <property type="molecule type" value="Genomic_DNA"/>
</dbReference>
<dbReference type="EMBL" id="AF347007">
    <property type="protein sequence ID" value="AAK17791.2"/>
    <property type="molecule type" value="Genomic_DNA"/>
</dbReference>
<dbReference type="EMBL" id="AF347008">
    <property type="protein sequence ID" value="AAK17804.2"/>
    <property type="molecule type" value="Genomic_DNA"/>
</dbReference>
<dbReference type="EMBL" id="AF347009">
    <property type="protein sequence ID" value="AAK17817.2"/>
    <property type="molecule type" value="Genomic_DNA"/>
</dbReference>
<dbReference type="EMBL" id="AF347010">
    <property type="protein sequence ID" value="AAK17830.2"/>
    <property type="molecule type" value="Genomic_DNA"/>
</dbReference>
<dbReference type="EMBL" id="AF347011">
    <property type="protein sequence ID" value="AAK17843.2"/>
    <property type="molecule type" value="Genomic_DNA"/>
</dbReference>
<dbReference type="EMBL" id="AF347012">
    <property type="protein sequence ID" value="AAK17856.2"/>
    <property type="molecule type" value="Genomic_DNA"/>
</dbReference>
<dbReference type="EMBL" id="AF347013">
    <property type="protein sequence ID" value="AAK17869.2"/>
    <property type="molecule type" value="Genomic_DNA"/>
</dbReference>
<dbReference type="EMBL" id="AF347014">
    <property type="protein sequence ID" value="AAK17882.2"/>
    <property type="molecule type" value="Genomic_DNA"/>
</dbReference>
<dbReference type="EMBL" id="AF347015">
    <property type="protein sequence ID" value="AAK17895.2"/>
    <property type="molecule type" value="Genomic_DNA"/>
</dbReference>
<dbReference type="EMBL" id="AF381981">
    <property type="protein sequence ID" value="AAL54394.1"/>
    <property type="molecule type" value="Genomic_DNA"/>
</dbReference>
<dbReference type="EMBL" id="AF381982">
    <property type="protein sequence ID" value="AAL54409.1"/>
    <property type="molecule type" value="Genomic_DNA"/>
</dbReference>
<dbReference type="EMBL" id="AF381983">
    <property type="protein sequence ID" value="AAL54422.1"/>
    <property type="molecule type" value="Genomic_DNA"/>
</dbReference>
<dbReference type="EMBL" id="AF381984">
    <property type="protein sequence ID" value="AAL54435.1"/>
    <property type="molecule type" value="Genomic_DNA"/>
</dbReference>
<dbReference type="EMBL" id="AF381985">
    <property type="protein sequence ID" value="AAL54448.1"/>
    <property type="molecule type" value="Genomic_DNA"/>
</dbReference>
<dbReference type="EMBL" id="AF381986">
    <property type="protein sequence ID" value="AAL54461.1"/>
    <property type="molecule type" value="Genomic_DNA"/>
</dbReference>
<dbReference type="EMBL" id="AF381987">
    <property type="protein sequence ID" value="AAL54474.1"/>
    <property type="molecule type" value="Genomic_DNA"/>
</dbReference>
<dbReference type="EMBL" id="AF381988">
    <property type="protein sequence ID" value="AAL54487.1"/>
    <property type="molecule type" value="Genomic_DNA"/>
</dbReference>
<dbReference type="EMBL" id="AF381989">
    <property type="protein sequence ID" value="AAL54500.1"/>
    <property type="molecule type" value="Genomic_DNA"/>
</dbReference>
<dbReference type="EMBL" id="AF381990">
    <property type="protein sequence ID" value="AAL54513.1"/>
    <property type="molecule type" value="Genomic_DNA"/>
</dbReference>
<dbReference type="EMBL" id="AF381991">
    <property type="protein sequence ID" value="AAL54526.1"/>
    <property type="molecule type" value="Genomic_DNA"/>
</dbReference>
<dbReference type="EMBL" id="AF381992">
    <property type="protein sequence ID" value="AAL54539.1"/>
    <property type="molecule type" value="Genomic_DNA"/>
</dbReference>
<dbReference type="EMBL" id="AF381993">
    <property type="protein sequence ID" value="AAL54552.1"/>
    <property type="molecule type" value="Genomic_DNA"/>
</dbReference>
<dbReference type="EMBL" id="AF381994">
    <property type="protein sequence ID" value="AAL54565.1"/>
    <property type="molecule type" value="Genomic_DNA"/>
</dbReference>
<dbReference type="EMBL" id="AF381995">
    <property type="protein sequence ID" value="AAL54578.1"/>
    <property type="molecule type" value="Genomic_DNA"/>
</dbReference>
<dbReference type="EMBL" id="AF381996">
    <property type="protein sequence ID" value="AAL54591.1"/>
    <property type="molecule type" value="Genomic_DNA"/>
</dbReference>
<dbReference type="EMBL" id="AF381997">
    <property type="protein sequence ID" value="AAL54604.1"/>
    <property type="molecule type" value="Genomic_DNA"/>
</dbReference>
<dbReference type="EMBL" id="AF381998">
    <property type="protein sequence ID" value="AAL54617.1"/>
    <property type="molecule type" value="Genomic_DNA"/>
</dbReference>
<dbReference type="EMBL" id="AF381999">
    <property type="protein sequence ID" value="AAL54630.1"/>
    <property type="molecule type" value="Genomic_DNA"/>
</dbReference>
<dbReference type="EMBL" id="AF382000">
    <property type="protein sequence ID" value="AAL54643.1"/>
    <property type="molecule type" value="Genomic_DNA"/>
</dbReference>
<dbReference type="EMBL" id="AF382001">
    <property type="protein sequence ID" value="AAL54656.1"/>
    <property type="molecule type" value="Genomic_DNA"/>
</dbReference>
<dbReference type="EMBL" id="AF382002">
    <property type="protein sequence ID" value="AAL54669.1"/>
    <property type="molecule type" value="Genomic_DNA"/>
</dbReference>
<dbReference type="EMBL" id="AF382003">
    <property type="protein sequence ID" value="AAL54682.1"/>
    <property type="molecule type" value="Genomic_DNA"/>
</dbReference>
<dbReference type="EMBL" id="AF382004">
    <property type="protein sequence ID" value="AAL54695.1"/>
    <property type="molecule type" value="Genomic_DNA"/>
</dbReference>
<dbReference type="EMBL" id="AF382005">
    <property type="protein sequence ID" value="AAL54708.1"/>
    <property type="molecule type" value="Genomic_DNA"/>
</dbReference>
<dbReference type="EMBL" id="AF382006">
    <property type="protein sequence ID" value="AAL54721.1"/>
    <property type="molecule type" value="Genomic_DNA"/>
</dbReference>
<dbReference type="EMBL" id="AF382007">
    <property type="protein sequence ID" value="AAL54734.1"/>
    <property type="molecule type" value="Genomic_DNA"/>
</dbReference>
<dbReference type="EMBL" id="AF382008">
    <property type="protein sequence ID" value="AAL54747.1"/>
    <property type="molecule type" value="Genomic_DNA"/>
</dbReference>
<dbReference type="EMBL" id="AF382009">
    <property type="protein sequence ID" value="AAL54760.1"/>
    <property type="molecule type" value="Genomic_DNA"/>
</dbReference>
<dbReference type="EMBL" id="AF382010">
    <property type="protein sequence ID" value="AAL54773.1"/>
    <property type="molecule type" value="Genomic_DNA"/>
</dbReference>
<dbReference type="EMBL" id="AF382011">
    <property type="protein sequence ID" value="AAL54786.1"/>
    <property type="molecule type" value="Genomic_DNA"/>
</dbReference>
<dbReference type="EMBL" id="AF382012">
    <property type="protein sequence ID" value="AAL54799.1"/>
    <property type="molecule type" value="Genomic_DNA"/>
</dbReference>
<dbReference type="EMBL" id="AF382013">
    <property type="protein sequence ID" value="AAL54812.1"/>
    <property type="molecule type" value="Genomic_DNA"/>
</dbReference>
<dbReference type="EMBL" id="AF465942">
    <property type="protein sequence ID" value="AAN14559.1"/>
    <property type="molecule type" value="Genomic_DNA"/>
</dbReference>
<dbReference type="EMBL" id="AF465945">
    <property type="protein sequence ID" value="AAN14592.1"/>
    <property type="molecule type" value="Genomic_DNA"/>
</dbReference>
<dbReference type="EMBL" id="AF465946">
    <property type="protein sequence ID" value="AAN14603.1"/>
    <property type="molecule type" value="Genomic_DNA"/>
</dbReference>
<dbReference type="EMBL" id="AF465947">
    <property type="protein sequence ID" value="AAN14614.1"/>
    <property type="molecule type" value="Genomic_DNA"/>
</dbReference>
<dbReference type="EMBL" id="AF465948">
    <property type="protein sequence ID" value="AAN14625.1"/>
    <property type="molecule type" value="Genomic_DNA"/>
</dbReference>
<dbReference type="EMBL" id="AF465949">
    <property type="protein sequence ID" value="AAN14636.1"/>
    <property type="molecule type" value="Genomic_DNA"/>
</dbReference>
<dbReference type="EMBL" id="AF465953">
    <property type="protein sequence ID" value="AAN14680.1"/>
    <property type="molecule type" value="Genomic_DNA"/>
</dbReference>
<dbReference type="EMBL" id="AF465956">
    <property type="protein sequence ID" value="AAN14713.1"/>
    <property type="molecule type" value="Genomic_DNA"/>
</dbReference>
<dbReference type="EMBL" id="AF465968">
    <property type="protein sequence ID" value="AAN14845.1"/>
    <property type="molecule type" value="Genomic_DNA"/>
</dbReference>
<dbReference type="EMBL" id="AF465971">
    <property type="protein sequence ID" value="AAN14878.1"/>
    <property type="molecule type" value="Genomic_DNA"/>
</dbReference>
<dbReference type="EMBL" id="AF465972">
    <property type="protein sequence ID" value="AAN14889.1"/>
    <property type="molecule type" value="Genomic_DNA"/>
</dbReference>
<dbReference type="EMBL" id="AF465973">
    <property type="protein sequence ID" value="AAN14900.1"/>
    <property type="molecule type" value="Genomic_DNA"/>
</dbReference>
<dbReference type="EMBL" id="AF465974">
    <property type="protein sequence ID" value="AAN14911.1"/>
    <property type="molecule type" value="Genomic_DNA"/>
</dbReference>
<dbReference type="EMBL" id="AF465975">
    <property type="protein sequence ID" value="AAN14922.1"/>
    <property type="molecule type" value="Genomic_DNA"/>
</dbReference>
<dbReference type="EMBL" id="AF465977">
    <property type="protein sequence ID" value="AAN14944.1"/>
    <property type="molecule type" value="Genomic_DNA"/>
</dbReference>
<dbReference type="EMBL" id="M28016">
    <property type="protein sequence ID" value="AAA31851.1"/>
    <property type="molecule type" value="mRNA"/>
</dbReference>
<dbReference type="PIR" id="A00151">
    <property type="entry name" value="CBHU"/>
</dbReference>
<dbReference type="RefSeq" id="YP_003024038.1">
    <property type="nucleotide sequence ID" value="NC_012920.1"/>
</dbReference>
<dbReference type="PDB" id="5XTE">
    <property type="method" value="EM"/>
    <property type="resolution" value="3.40 A"/>
    <property type="chains" value="J/V=2-379"/>
</dbReference>
<dbReference type="PDB" id="5XTH">
    <property type="method" value="EM"/>
    <property type="resolution" value="3.90 A"/>
    <property type="chains" value="AJ/AV=2-379"/>
</dbReference>
<dbReference type="PDB" id="5XTI">
    <property type="method" value="EM"/>
    <property type="resolution" value="17.40 A"/>
    <property type="chains" value="AJ/AV=2-379"/>
</dbReference>
<dbReference type="PDBsum" id="5XTE"/>
<dbReference type="PDBsum" id="5XTH"/>
<dbReference type="PDBsum" id="5XTI"/>
<dbReference type="SMR" id="P00156"/>
<dbReference type="BioGRID" id="110619">
    <property type="interactions" value="22"/>
</dbReference>
<dbReference type="ComplexPortal" id="CPX-560">
    <property type="entry name" value="Mitochondrial respiratory chain complex III"/>
</dbReference>
<dbReference type="FunCoup" id="P00156">
    <property type="interactions" value="353"/>
</dbReference>
<dbReference type="IntAct" id="P00156">
    <property type="interactions" value="18"/>
</dbReference>
<dbReference type="MINT" id="P00156"/>
<dbReference type="STRING" id="9606.ENSP00000354554"/>
<dbReference type="BindingDB" id="P00156"/>
<dbReference type="DrugBank" id="DB07763">
    <property type="generic name" value="(5S)-3-ANILINO-5-(2,4-DIFLUOROPHENYL)-5-METHYL-1,3-OXAZOLIDINE-2,4-DIONE"/>
</dbReference>
<dbReference type="DrugBank" id="DB07778">
    <property type="generic name" value="(S)-famoxadone"/>
</dbReference>
<dbReference type="DrugBank" id="DB04141">
    <property type="generic name" value="2-Hexyloxy-6-Hydroxymethyl-Tetrahydro-Pyran-3,4,5-Triol"/>
</dbReference>
<dbReference type="DrugBank" id="DB08453">
    <property type="generic name" value="2-Nonyl-4-quinolinol 1-oxide"/>
</dbReference>
<dbReference type="DrugBank" id="DB07636">
    <property type="generic name" value="5-Heptyl-6-hydroxy-1,3-benzothiazole-4,7-dione"/>
</dbReference>
<dbReference type="DrugBank" id="DB04799">
    <property type="generic name" value="6-Hydroxy-5-undecyl-4,7-benzothiazoledione"/>
</dbReference>
<dbReference type="DrugBank" id="DB07401">
    <property type="generic name" value="Azoxystrobin"/>
</dbReference>
<dbReference type="DrugBank" id="DB08330">
    <property type="generic name" value="METHYL (2Z)-3-METHOXY-2-{2-[(E)-2-PHENYLVINYL]PHENYL}ACRYLATE"/>
</dbReference>
<dbReference type="DrugBank" id="DB08690">
    <property type="generic name" value="Ubiquinone Q2"/>
</dbReference>
<dbReference type="iPTMnet" id="P00156"/>
<dbReference type="PhosphoSitePlus" id="P00156"/>
<dbReference type="SwissPalm" id="P00156"/>
<dbReference type="BioMuta" id="MT-CYB"/>
<dbReference type="DMDM" id="408360043"/>
<dbReference type="jPOST" id="P00156"/>
<dbReference type="MassIVE" id="P00156"/>
<dbReference type="PaxDb" id="9606-ENSP00000354554"/>
<dbReference type="PeptideAtlas" id="P00156"/>
<dbReference type="ProteomicsDB" id="51225"/>
<dbReference type="Pumba" id="P00156"/>
<dbReference type="TopDownProteomics" id="P00156"/>
<dbReference type="Antibodypedia" id="35365">
    <property type="antibodies" value="169 antibodies from 28 providers"/>
</dbReference>
<dbReference type="DNASU" id="4519"/>
<dbReference type="Ensembl" id="ENST00000361789.2">
    <property type="protein sequence ID" value="ENSP00000354554.2"/>
    <property type="gene ID" value="ENSG00000198727.2"/>
</dbReference>
<dbReference type="GeneID" id="4519"/>
<dbReference type="KEGG" id="hsa:4519"/>
<dbReference type="AGR" id="HGNC:7427"/>
<dbReference type="CTD" id="4519"/>
<dbReference type="DisGeNET" id="4519"/>
<dbReference type="GeneCards" id="MT-CYB"/>
<dbReference type="GeneReviews" id="MT-CYB"/>
<dbReference type="HGNC" id="HGNC:7427">
    <property type="gene designation" value="MT-CYB"/>
</dbReference>
<dbReference type="HPA" id="ENSG00000198727">
    <property type="expression patterns" value="Tissue enhanced (heart)"/>
</dbReference>
<dbReference type="MalaCards" id="MT-CYB"/>
<dbReference type="MIM" id="500000">
    <property type="type" value="phenotype"/>
</dbReference>
<dbReference type="MIM" id="516020">
    <property type="type" value="gene"/>
</dbReference>
<dbReference type="MIM" id="535000">
    <property type="type" value="phenotype"/>
</dbReference>
<dbReference type="neXtProt" id="NX_P00156"/>
<dbReference type="OpenTargets" id="ENSG00000198727"/>
<dbReference type="Orphanet" id="137675">
    <property type="disease" value="Histiocytoid cardiomyopathy"/>
</dbReference>
<dbReference type="Orphanet" id="1460">
    <property type="disease" value="Isolated complex III deficiency"/>
</dbReference>
<dbReference type="Orphanet" id="104">
    <property type="disease" value="Leber hereditary optic neuropathy"/>
</dbReference>
<dbReference type="PharmGKB" id="PA31234"/>
<dbReference type="VEuPathDB" id="HostDB:ENSG00000198727"/>
<dbReference type="eggNOG" id="KOG4663">
    <property type="taxonomic scope" value="Eukaryota"/>
</dbReference>
<dbReference type="GeneTree" id="ENSGT00390000017948"/>
<dbReference type="HOGENOM" id="CLU_031114_3_0_1"/>
<dbReference type="InParanoid" id="P00156"/>
<dbReference type="OMA" id="NISAWWN"/>
<dbReference type="PAN-GO" id="P00156">
    <property type="GO annotations" value="3 GO annotations based on evolutionary models"/>
</dbReference>
<dbReference type="PhylomeDB" id="P00156"/>
<dbReference type="TreeFam" id="TF353088"/>
<dbReference type="BioCyc" id="MetaCyc:HS00029-MONOMER"/>
<dbReference type="PathwayCommons" id="P00156"/>
<dbReference type="Reactome" id="R-HSA-611105">
    <property type="pathway name" value="Respiratory electron transport"/>
</dbReference>
<dbReference type="Reactome" id="R-HSA-9865881">
    <property type="pathway name" value="Complex III assembly"/>
</dbReference>
<dbReference type="SignaLink" id="P00156"/>
<dbReference type="SIGNOR" id="P00156"/>
<dbReference type="BioGRID-ORCS" id="4519">
    <property type="hits" value="0 hits in 2 CRISPR screens"/>
</dbReference>
<dbReference type="ChiTaRS" id="CYTB">
    <property type="organism name" value="human"/>
</dbReference>
<dbReference type="GeneWiki" id="MT-CYB"/>
<dbReference type="GenomeRNAi" id="4519"/>
<dbReference type="Pharos" id="P00156">
    <property type="development level" value="Tbio"/>
</dbReference>
<dbReference type="PRO" id="PR:P00156"/>
<dbReference type="Proteomes" id="UP000005640">
    <property type="component" value="Mitochondrion MT"/>
</dbReference>
<dbReference type="RNAct" id="P00156">
    <property type="molecule type" value="protein"/>
</dbReference>
<dbReference type="Bgee" id="ENSG00000198727">
    <property type="expression patterns" value="Expressed in apex of heart and 95 other cell types or tissues"/>
</dbReference>
<dbReference type="ExpressionAtlas" id="P00156">
    <property type="expression patterns" value="baseline and differential"/>
</dbReference>
<dbReference type="GO" id="GO:0016020">
    <property type="term" value="C:membrane"/>
    <property type="evidence" value="ECO:0000318"/>
    <property type="project" value="GO_Central"/>
</dbReference>
<dbReference type="GO" id="GO:0005743">
    <property type="term" value="C:mitochondrial inner membrane"/>
    <property type="evidence" value="ECO:0000314"/>
    <property type="project" value="ComplexPortal"/>
</dbReference>
<dbReference type="GO" id="GO:0005739">
    <property type="term" value="C:mitochondrion"/>
    <property type="evidence" value="ECO:0007005"/>
    <property type="project" value="UniProtKB"/>
</dbReference>
<dbReference type="GO" id="GO:0045275">
    <property type="term" value="C:respiratory chain complex III"/>
    <property type="evidence" value="ECO:0000318"/>
    <property type="project" value="GO_Central"/>
</dbReference>
<dbReference type="GO" id="GO:0046872">
    <property type="term" value="F:metal ion binding"/>
    <property type="evidence" value="ECO:0007669"/>
    <property type="project" value="UniProtKB-KW"/>
</dbReference>
<dbReference type="GO" id="GO:0044877">
    <property type="term" value="F:protein-containing complex binding"/>
    <property type="evidence" value="ECO:0007669"/>
    <property type="project" value="Ensembl"/>
</dbReference>
<dbReference type="GO" id="GO:0008121">
    <property type="term" value="F:ubiquinol-cytochrome-c reductase activity"/>
    <property type="evidence" value="ECO:0000303"/>
    <property type="project" value="UniProtKB"/>
</dbReference>
<dbReference type="GO" id="GO:0031100">
    <property type="term" value="P:animal organ regeneration"/>
    <property type="evidence" value="ECO:0007669"/>
    <property type="project" value="Ensembl"/>
</dbReference>
<dbReference type="GO" id="GO:0045333">
    <property type="term" value="P:cellular respiration"/>
    <property type="evidence" value="ECO:0000303"/>
    <property type="project" value="ComplexPortal"/>
</dbReference>
<dbReference type="GO" id="GO:0015990">
    <property type="term" value="P:electron transport coupled proton transport"/>
    <property type="evidence" value="ECO:0007669"/>
    <property type="project" value="Ensembl"/>
</dbReference>
<dbReference type="GO" id="GO:0006122">
    <property type="term" value="P:mitochondrial electron transport, ubiquinol to cytochrome c"/>
    <property type="evidence" value="ECO:0000318"/>
    <property type="project" value="GO_Central"/>
</dbReference>
<dbReference type="GO" id="GO:0046686">
    <property type="term" value="P:response to cadmium ion"/>
    <property type="evidence" value="ECO:0007669"/>
    <property type="project" value="Ensembl"/>
</dbReference>
<dbReference type="GO" id="GO:0051592">
    <property type="term" value="P:response to calcium ion"/>
    <property type="evidence" value="ECO:0007669"/>
    <property type="project" value="Ensembl"/>
</dbReference>
<dbReference type="GO" id="GO:0033590">
    <property type="term" value="P:response to cobalamin"/>
    <property type="evidence" value="ECO:0007669"/>
    <property type="project" value="Ensembl"/>
</dbReference>
<dbReference type="GO" id="GO:0046688">
    <property type="term" value="P:response to copper ion"/>
    <property type="evidence" value="ECO:0007669"/>
    <property type="project" value="Ensembl"/>
</dbReference>
<dbReference type="GO" id="GO:1904421">
    <property type="term" value="P:response to D-galactosamine"/>
    <property type="evidence" value="ECO:0007669"/>
    <property type="project" value="Ensembl"/>
</dbReference>
<dbReference type="GO" id="GO:0045471">
    <property type="term" value="P:response to ethanol"/>
    <property type="evidence" value="ECO:0007669"/>
    <property type="project" value="Ensembl"/>
</dbReference>
<dbReference type="GO" id="GO:0033762">
    <property type="term" value="P:response to glucagon"/>
    <property type="evidence" value="ECO:0007669"/>
    <property type="project" value="Ensembl"/>
</dbReference>
<dbReference type="GO" id="GO:0055093">
    <property type="term" value="P:response to hyperoxia"/>
    <property type="evidence" value="ECO:0007669"/>
    <property type="project" value="Ensembl"/>
</dbReference>
<dbReference type="GO" id="GO:0001666">
    <property type="term" value="P:response to hypoxia"/>
    <property type="evidence" value="ECO:0007669"/>
    <property type="project" value="Ensembl"/>
</dbReference>
<dbReference type="GO" id="GO:0046689">
    <property type="term" value="P:response to mercury ion"/>
    <property type="evidence" value="ECO:0007669"/>
    <property type="project" value="Ensembl"/>
</dbReference>
<dbReference type="GO" id="GO:0009636">
    <property type="term" value="P:response to toxic substance"/>
    <property type="evidence" value="ECO:0007669"/>
    <property type="project" value="Ensembl"/>
</dbReference>
<dbReference type="GO" id="GO:0009410">
    <property type="term" value="P:response to xenobiotic stimulus"/>
    <property type="evidence" value="ECO:0007669"/>
    <property type="project" value="Ensembl"/>
</dbReference>
<dbReference type="CDD" id="cd00290">
    <property type="entry name" value="cytochrome_b_C"/>
    <property type="match status" value="1"/>
</dbReference>
<dbReference type="CDD" id="cd00284">
    <property type="entry name" value="Cytochrome_b_N"/>
    <property type="match status" value="1"/>
</dbReference>
<dbReference type="FunFam" id="1.20.810.10:FF:000002">
    <property type="entry name" value="Cytochrome b"/>
    <property type="match status" value="1"/>
</dbReference>
<dbReference type="Gene3D" id="1.20.810.10">
    <property type="entry name" value="Cytochrome Bc1 Complex, Chain C"/>
    <property type="match status" value="1"/>
</dbReference>
<dbReference type="InterPro" id="IPR005798">
    <property type="entry name" value="Cyt_b/b6_C"/>
</dbReference>
<dbReference type="InterPro" id="IPR036150">
    <property type="entry name" value="Cyt_b/b6_C_sf"/>
</dbReference>
<dbReference type="InterPro" id="IPR005797">
    <property type="entry name" value="Cyt_b/b6_N"/>
</dbReference>
<dbReference type="InterPro" id="IPR027387">
    <property type="entry name" value="Cytb/b6-like_sf"/>
</dbReference>
<dbReference type="InterPro" id="IPR030689">
    <property type="entry name" value="Cytochrome_b"/>
</dbReference>
<dbReference type="InterPro" id="IPR048260">
    <property type="entry name" value="Cytochrome_b_C_euk/bac"/>
</dbReference>
<dbReference type="InterPro" id="IPR048259">
    <property type="entry name" value="Cytochrome_b_N_euk/bac"/>
</dbReference>
<dbReference type="InterPro" id="IPR016174">
    <property type="entry name" value="Di-haem_cyt_TM"/>
</dbReference>
<dbReference type="PANTHER" id="PTHR19271">
    <property type="entry name" value="CYTOCHROME B"/>
    <property type="match status" value="1"/>
</dbReference>
<dbReference type="PANTHER" id="PTHR19271:SF16">
    <property type="entry name" value="CYTOCHROME B"/>
    <property type="match status" value="1"/>
</dbReference>
<dbReference type="Pfam" id="PF00032">
    <property type="entry name" value="Cytochrom_B_C"/>
    <property type="match status" value="1"/>
</dbReference>
<dbReference type="Pfam" id="PF00033">
    <property type="entry name" value="Cytochrome_B"/>
    <property type="match status" value="1"/>
</dbReference>
<dbReference type="PIRSF" id="PIRSF038885">
    <property type="entry name" value="COB"/>
    <property type="match status" value="1"/>
</dbReference>
<dbReference type="SUPFAM" id="SSF81648">
    <property type="entry name" value="a domain/subunit of cytochrome bc1 complex (Ubiquinol-cytochrome c reductase)"/>
    <property type="match status" value="1"/>
</dbReference>
<dbReference type="SUPFAM" id="SSF81342">
    <property type="entry name" value="Transmembrane di-heme cytochromes"/>
    <property type="match status" value="1"/>
</dbReference>
<dbReference type="PROSITE" id="PS51003">
    <property type="entry name" value="CYTB_CTER"/>
    <property type="match status" value="1"/>
</dbReference>
<dbReference type="PROSITE" id="PS51002">
    <property type="entry name" value="CYTB_NTER"/>
    <property type="match status" value="1"/>
</dbReference>
<keyword id="KW-0002">3D-structure</keyword>
<keyword id="KW-0122">Cardiomyopathy</keyword>
<keyword id="KW-0898">Cataract</keyword>
<keyword id="KW-0209">Deafness</keyword>
<keyword id="KW-0225">Disease variant</keyword>
<keyword id="KW-0249">Electron transport</keyword>
<keyword id="KW-0349">Heme</keyword>
<keyword id="KW-0408">Iron</keyword>
<keyword id="KW-0429">Leber hereditary optic neuropathy</keyword>
<keyword id="KW-0472">Membrane</keyword>
<keyword id="KW-0479">Metal-binding</keyword>
<keyword id="KW-0496">Mitochondrion</keyword>
<keyword id="KW-0999">Mitochondrion inner membrane</keyword>
<keyword id="KW-1274">Primary mitochondrial disease</keyword>
<keyword id="KW-1267">Proteomics identification</keyword>
<keyword id="KW-1185">Reference proteome</keyword>
<keyword id="KW-0679">Respiratory chain</keyword>
<keyword id="KW-0812">Transmembrane</keyword>
<keyword id="KW-1133">Transmembrane helix</keyword>
<keyword id="KW-0813">Transport</keyword>
<keyword id="KW-0830">Ubiquinone</keyword>
<name>CYB_HUMAN</name>
<accession>P00156</accession>
<accession>Q34786</accession>
<accession>Q8HBR6</accession>
<accession>Q8HNQ0</accession>
<accession>Q8HNQ1</accession>
<accession>Q8HNQ9</accession>
<accession>Q8HNR4</accession>
<accession>Q8HNR7</accession>
<accession>Q8W7V8</accession>
<accession>Q8WCV9</accession>
<accession>Q8WCY2</accession>
<accession>Q8WCY7</accession>
<accession>Q8WCY8</accession>
<accession>Q9B1A6</accession>
<accession>Q9B1B6</accession>
<accession>Q9B1B8</accession>
<accession>Q9B1D4</accession>
<accession>Q9B1X6</accession>
<accession>Q9B2V0</accession>
<accession>Q9B2V8</accession>
<accession>Q9B2W0</accession>
<accession>Q9B2W3</accession>
<accession>Q9B2W8</accession>
<accession>Q9B2X1</accession>
<accession>Q9B2X7</accession>
<accession>Q9B2X9</accession>
<accession>Q9B2Y3</accession>
<accession>Q9B2Z0</accession>
<accession>Q9B2Z4</accession>
<accession>Q9T6H6</accession>
<accession>Q9T9Y0</accession>
<accession>Q9TEH4</accession>
<evidence type="ECO:0000250" key="1"/>
<evidence type="ECO:0000250" key="2">
    <source>
        <dbReference type="UniProtKB" id="P00157"/>
    </source>
</evidence>
<evidence type="ECO:0000255" key="3">
    <source>
        <dbReference type="PROSITE-ProRule" id="PRU00967"/>
    </source>
</evidence>
<evidence type="ECO:0000255" key="4">
    <source>
        <dbReference type="PROSITE-ProRule" id="PRU00968"/>
    </source>
</evidence>
<evidence type="ECO:0000269" key="5">
    <source>
    </source>
</evidence>
<evidence type="ECO:0000269" key="6">
    <source>
    </source>
</evidence>
<evidence type="ECO:0000269" key="7">
    <source>
    </source>
</evidence>
<evidence type="ECO:0000269" key="8">
    <source>
    </source>
</evidence>
<evidence type="ECO:0000269" key="9">
    <source>
    </source>
</evidence>
<evidence type="ECO:0000269" key="10">
    <source>
    </source>
</evidence>
<evidence type="ECO:0000269" key="11">
    <source>
    </source>
</evidence>
<evidence type="ECO:0000269" key="12">
    <source>
    </source>
</evidence>
<evidence type="ECO:0000269" key="13">
    <source>
    </source>
</evidence>
<evidence type="ECO:0000269" key="14">
    <source>
    </source>
</evidence>
<evidence type="ECO:0000269" key="15">
    <source>
    </source>
</evidence>
<evidence type="ECO:0000269" key="16">
    <source>
    </source>
</evidence>
<evidence type="ECO:0000269" key="17">
    <source>
    </source>
</evidence>
<evidence type="ECO:0000269" key="18">
    <source>
    </source>
</evidence>
<evidence type="ECO:0000269" key="19">
    <source>
    </source>
</evidence>
<evidence type="ECO:0000269" key="20">
    <source>
    </source>
</evidence>
<evidence type="ECO:0000269" key="21">
    <source>
    </source>
</evidence>
<evidence type="ECO:0000269" key="22">
    <source>
    </source>
</evidence>
<evidence type="ECO:0007744" key="23">
    <source>
    </source>
</evidence>
<evidence type="ECO:0007829" key="24">
    <source>
        <dbReference type="PDB" id="5XTE"/>
    </source>
</evidence>
<geneLocation type="mitochondrion"/>
<reference key="1">
    <citation type="journal article" date="1981" name="Nature">
        <title>Sequence and organization of the human mitochondrial genome.</title>
        <authorList>
            <person name="Anderson S."/>
            <person name="Bankier A.T."/>
            <person name="Barrell B.G."/>
            <person name="de Bruijn M.H.L."/>
            <person name="Coulson A.R."/>
            <person name="Drouin J."/>
            <person name="Eperon I.C."/>
            <person name="Nierlich D.P."/>
            <person name="Roe B.A."/>
            <person name="Sanger F."/>
            <person name="Schreier P.H."/>
            <person name="Smith A.J.H."/>
            <person name="Staden R."/>
            <person name="Young I.G."/>
        </authorList>
    </citation>
    <scope>NUCLEOTIDE SEQUENCE [LARGE SCALE GENOMIC DNA]</scope>
    <source>
        <tissue>Placenta</tissue>
    </source>
</reference>
<reference key="2">
    <citation type="journal article" date="1999" name="Nat. Genet.">
        <title>Reanalysis and revision of the Cambridge reference sequence for human mitochondrial DNA.</title>
        <authorList>
            <person name="Andrews R.M."/>
            <person name="Kubacka I."/>
            <person name="Chinnery P.F."/>
            <person name="Lightowlers R.N."/>
            <person name="Turnbull D.M."/>
            <person name="Howell N."/>
        </authorList>
    </citation>
    <scope>SEQUENCE REVISION TO 7</scope>
</reference>
<reference key="3">
    <citation type="journal article" date="1995" name="J. Inherit. Metab. Dis.">
        <title>Novel mutations in mitochondrial cytochrome b in fatal post partum cardiomyopathy.</title>
        <authorList>
            <person name="Marin-Garcia J."/>
            <person name="Ananthakrishnan R."/>
            <person name="Gonzalvo A."/>
            <person name="Goldenthal M.J."/>
        </authorList>
    </citation>
    <scope>NUCLEOTIDE SEQUENCE [GENOMIC DNA]</scope>
    <scope>VARIANTS ILE-7 AND HIS-255</scope>
    <source>
        <tissue>Heart</tissue>
    </source>
</reference>
<reference key="4">
    <citation type="journal article" date="1995" name="Proc. Natl. Acad. Sci. U.S.A.">
        <title>Recent African origin of modern humans revealed by complete sequences of hominoid mitochondrial DNAs.</title>
        <authorList>
            <person name="Horai S."/>
            <person name="Hayasaka K."/>
            <person name="Kondo R."/>
            <person name="Tsugane K."/>
            <person name="Takahata N."/>
        </authorList>
    </citation>
    <scope>NUCLEOTIDE SEQUENCE [GENOMIC DNA]</scope>
    <scope>VARIANTS ILE-7; THR-191; ALA-194 AND THR-229</scope>
    <source>
        <tissue>Placenta</tissue>
    </source>
</reference>
<reference key="5">
    <citation type="journal article" date="2000" name="Nature">
        <title>Mitochondrial genome variation and the origin of modern humans.</title>
        <authorList>
            <person name="Ingman M."/>
            <person name="Kaessmann H."/>
            <person name="Paeaebo S."/>
            <person name="Gyllensten U."/>
        </authorList>
    </citation>
    <scope>NUCLEOTIDE SEQUENCE [GENOMIC DNA] OF 1-378</scope>
    <scope>VARIANTS ILE-7; SER-8; LEU-18; VAL-39; THR-78; THR-122; ALA-123; THR-153; ALA-194; THR-229; ILE-236; THR-306; THR-329; VAL-334; MET-353; MET-356 AND ILE-368</scope>
</reference>
<reference key="6">
    <citation type="journal article" date="2001" name="BMC Genet.">
        <title>Major genomic mitochondrial lineages delineate early human expansions.</title>
        <authorList>
            <person name="Maca-Meyer N."/>
            <person name="Gonzalez A.M."/>
            <person name="Larruga J.M."/>
            <person name="Flores C."/>
            <person name="Cabrera V.M."/>
        </authorList>
    </citation>
    <scope>NUCLEOTIDE SEQUENCE [GENOMIC DNA] OF 1-378</scope>
    <scope>VARIANTS ILE-7; SER-8; LEU-18; THR-122; VAL-164; 189-ILE-ALA-190 DELINS VAL-THR; ALA-194; THR-229; ILE-236; THR-330; ALA-360 AND ILE-368</scope>
</reference>
<reference key="7">
    <citation type="journal article" date="2002" name="Am. J. Hum. Genet.">
        <title>Mitochondrial genome diversity of native Americans supports a single early entry of founder populations into America.</title>
        <authorList>
            <person name="Silva W.A. Jr."/>
            <person name="Bonatto S.L."/>
            <person name="Holanda A.J."/>
            <person name="Ribeiro-Dos-Santos A.K."/>
            <person name="Paixao B.M."/>
            <person name="Goldman G.H."/>
            <person name="Abe-Sandes K."/>
            <person name="Rodriguez-Delfin L."/>
            <person name="Barbosa M."/>
            <person name="Paco-Larson M.L."/>
            <person name="Petzl-Erler M.L."/>
            <person name="Valente V."/>
            <person name="Santos S.E."/>
            <person name="Zago M.A."/>
        </authorList>
    </citation>
    <scope>NUCLEOTIDE SEQUENCE [GENOMIC DNA] OF 1-378</scope>
    <scope>VARIANTS ILE-7; THR-39; VAL-78; THR-191; ALA-194 AND ASP-260</scope>
</reference>
<reference key="8">
    <citation type="journal article" date="1984" name="Mol. Biol. Med.">
        <title>Serendipitous cloning of a mitochondrial cDNA and its polymorphism.</title>
        <authorList>
            <person name="Spurr N.K."/>
            <person name="Bodmer W.F."/>
        </authorList>
    </citation>
    <scope>NUCLEOTIDE SEQUENCE [MRNA] OF 269-380</scope>
    <source>
        <tissue>Lymphoblast</tissue>
    </source>
</reference>
<reference key="9">
    <citation type="journal article" date="2000" name="Am. J. Hum. Genet.">
        <title>Mitochondrial encephalomyopathy and complex III deficiency associated with a stop-codon mutation in the cytochrome b gene.</title>
        <authorList>
            <person name="Keightley J.A."/>
            <person name="Anitori R."/>
            <person name="Burton M.D."/>
            <person name="Quan F."/>
            <person name="Buist N.R.M."/>
            <person name="Kennaway N.G."/>
        </authorList>
    </citation>
    <scope>DISEASE</scope>
</reference>
<reference key="10">
    <citation type="journal article" date="2015" name="Proteomics">
        <title>N-terminome analysis of the human mitochondrial proteome.</title>
        <authorList>
            <person name="Vaca Jacome A.S."/>
            <person name="Rabilloud T."/>
            <person name="Schaeffer-Reiss C."/>
            <person name="Rompais M."/>
            <person name="Ayoub D."/>
            <person name="Lane L."/>
            <person name="Bairoch A."/>
            <person name="Van Dorsselaer A."/>
            <person name="Carapito C."/>
        </authorList>
    </citation>
    <scope>IDENTIFICATION BY MASS SPECTROMETRY [LARGE SCALE ANALYSIS]</scope>
</reference>
<reference key="11">
    <citation type="journal article" date="1991" name="Hum. Genet.">
        <title>Normal variants of human mitochondrial DNA and translation products: the building of a reference data base.</title>
        <authorList>
            <person name="Marzuki S."/>
            <person name="Noer A.S."/>
            <person name="Lertrit P."/>
            <person name="Thyagarajan D."/>
            <person name="Kapsa R."/>
            <person name="Utthanaphol P."/>
            <person name="Byrne E."/>
        </authorList>
    </citation>
    <scope>VARIANTS ILE-7 AND PRO-87</scope>
</reference>
<reference key="12">
    <citation type="journal article" date="1992" name="Genetics">
        <title>Mitochondrial DNA complex I and III mutations associated with Leber's hereditary optic neuropathy.</title>
        <authorList>
            <person name="Brown M.D."/>
            <person name="Voljavec A.S."/>
            <person name="Lott M.T."/>
            <person name="Torroni A."/>
            <person name="Yang C.C."/>
            <person name="Wallace D.C."/>
        </authorList>
    </citation>
    <scope>VARIANTS LHON ASN-171 AND MET-356</scope>
</reference>
<reference key="13">
    <citation type="journal article" date="1996" name="Mol. Cell. Probes">
        <title>A novel gly290asp mitochondrial cytochrome b mutation linked to a complex III deficiency in progressive exercise intolerance.</title>
        <authorList>
            <person name="Dumoulin R."/>
            <person name="Sagnol I."/>
            <person name="Ferlin T."/>
            <person name="Bozon D."/>
            <person name="Stepien G."/>
            <person name="Mousson B."/>
        </authorList>
    </citation>
    <scope>VARIANT EXERCISE INTOLERANCE ASP-290</scope>
</reference>
<reference key="14">
    <citation type="journal article" date="1998" name="Neurology">
        <title>Missense mutation in the mtDNA cytochrome b gene in a patient with myopathy.</title>
        <authorList>
            <person name="Andreu A.L."/>
            <person name="Bruno C."/>
            <person name="Shanske S."/>
            <person name="Shtilbans A."/>
            <person name="Hirano M."/>
            <person name="Krishna S."/>
            <person name="Hayward L."/>
            <person name="Systrom D.S."/>
            <person name="Brown R.H. Jr."/>
            <person name="Dimauro S."/>
        </authorList>
    </citation>
    <scope>VARIANT MM GLU-339</scope>
</reference>
<reference key="15">
    <citation type="journal article" date="1998" name="Nat. Genet.">
        <title>Somatic mutations of the mitochondrial genome in human colorectal tumours.</title>
        <authorList>
            <person name="Polyak K."/>
            <person name="Li Y."/>
            <person name="Zhu H."/>
            <person name="Lengauer C."/>
            <person name="Willson J.K.V."/>
            <person name="Markowitz S.D."/>
            <person name="Trush M.A."/>
            <person name="Kinzler K.W."/>
            <person name="Vogelstein B."/>
        </authorList>
    </citation>
    <scope>VARIANTS COLORECTAL CANCER HIS-80 AND LEU-276</scope>
</reference>
<reference key="16">
    <citation type="journal article" date="1999" name="Hum. Genet.">
        <title>A mitochondrial cytochrome b mutation but no mutations of nuclearly encoded subunits in ubiquinol cytochrome c reductase (complex III) deficiency.</title>
        <authorList>
            <person name="Valnot I."/>
            <person name="Kassis J."/>
            <person name="Chretien D."/>
            <person name="de Lonlay P."/>
            <person name="Parfait B."/>
            <person name="Munnich A."/>
            <person name="Kachaner J."/>
            <person name="Rustin P."/>
            <person name="Roetig A."/>
        </authorList>
    </citation>
    <scope>VARIANT HCM GLU-166</scope>
    <scope>VARIANTS ILE-7; SER-8; LEU-18; ALA-194; ILE-236 AND THR-316</scope>
</reference>
<reference key="17">
    <citation type="journal article" date="1999" name="N. Engl. J. Med.">
        <title>Exercise intolerance due to mutations in the cytochrome b gene of mitochondrial DNA.</title>
        <authorList>
            <person name="Andreu A.L."/>
            <person name="Hanna M.G."/>
            <person name="Reichmann H."/>
            <person name="Bruno C."/>
            <person name="Penn A.S."/>
            <person name="Tanji K."/>
            <person name="Pallotti F."/>
            <person name="Iwata S."/>
            <person name="Bonilla E."/>
            <person name="Lach B."/>
            <person name="Morgan-Hughes J."/>
            <person name="DiMauro S."/>
        </authorList>
    </citation>
    <scope>VARIANTS MM SER-34 AND 251-GLY--LEU-258 DEL</scope>
</reference>
<reference key="18">
    <citation type="journal article" date="2000" name="Pediatr. Res.">
        <title>A missense mutation in the mitochondrial cytochrome b gene in a revisited case with histiocytoid cardiomyopathy.</title>
        <authorList>
            <person name="Andreu A.L."/>
            <person name="Checcarelli N."/>
            <person name="Iwata S."/>
            <person name="Shanske S."/>
            <person name="DiMauro S."/>
        </authorList>
    </citation>
    <scope>VARIANT CMIH ASP-251</scope>
</reference>
<reference key="19">
    <citation type="journal article" date="2001" name="Ann. Neurol.">
        <title>Multisystem disorder associated with a missense mutation in the mitochondrial cytochrome b gene.</title>
        <authorList>
            <person name="Wibrand F."/>
            <person name="Ravn K."/>
            <person name="Schwartz M."/>
            <person name="Rosenberg T."/>
            <person name="Horn N."/>
            <person name="Vissing J."/>
        </authorList>
    </citation>
    <scope>VARIANT MULTISYSTEM DISORDER CYS-278</scope>
</reference>
<reference key="20">
    <citation type="journal article" date="2001" name="Eur. J. Hum. Genet.">
        <title>Functional characterization of novel mutations in the human cytochrome b gene.</title>
        <authorList>
            <person name="Legros F."/>
            <person name="Chatzoglou E."/>
            <person name="Frachon P."/>
            <person name="de Baulny H.O."/>
            <person name="Laforet P."/>
            <person name="Jardel C."/>
            <person name="Godinot C."/>
            <person name="Lombes A."/>
        </authorList>
    </citation>
    <scope>VARIANT EXERCISE INTOLERANCE PRO-151</scope>
</reference>
<reference key="21">
    <citation type="journal article" date="2002" name="Ann. Neurol.">
        <title>Septo-optic dysplasia associated with a new mitochondrial cytochrome b mutation.</title>
        <authorList>
            <person name="Schuelke M."/>
            <person name="Krude H."/>
            <person name="Finckh B."/>
            <person name="Mayatepek E."/>
            <person name="Janssen A."/>
            <person name="Schmelz M."/>
            <person name="Trefz F."/>
            <person name="Trijbels F."/>
            <person name="Smeitink J."/>
        </authorList>
    </citation>
    <scope>VARIANT EXERCICE INTOLERANCE PRO-35</scope>
</reference>
<reference key="22">
    <citation type="journal article" date="2003" name="Hum. Genet.">
        <title>Association of the mitochondrial DNA 15497G/A polymorphism with obesity in a middle-aged and elderly Japanese population.</title>
        <authorList>
            <person name="Okura T."/>
            <person name="Koda M."/>
            <person name="Ando F."/>
            <person name="Niino N."/>
            <person name="Tanaka M."/>
            <person name="Shimokata H."/>
        </authorList>
    </citation>
    <scope>VARIANT SER-251</scope>
</reference>
<reference key="23">
    <citation type="journal article" date="2011" name="BMC Syst. Biol.">
        <title>Initial characterization of the human central proteome.</title>
        <authorList>
            <person name="Burkard T.R."/>
            <person name="Planyavsky M."/>
            <person name="Kaupe I."/>
            <person name="Breitwieser F.P."/>
            <person name="Buerckstuemmer T."/>
            <person name="Bennett K.L."/>
            <person name="Superti-Furga G."/>
            <person name="Colinge J."/>
        </authorList>
    </citation>
    <scope>VARIANT [LARGE SCALE ANALYSIS] ILE-7</scope>
    <scope>IDENTIFICATION BY MASS SPECTROMETRY [LARGE SCALE ANALYSIS]</scope>
</reference>
<sequence>MTPMRKTNPLMKLINHSFIDLPTPSNISAWWNFGSLLGACLILQITTGLFLAMHYSPDASTAFSSIAHITRDVNYGWIIRYLHANGASMFFICLFLHIGRGLYYGSFLYSETWNIGIILLLATMATAFMGYVLPWGQMSFWGATVITNLLSAIPYIGTDLVQWIWGGYSVDSPTLTRFFTFHFILPFIIAALATLHLLFLHETGSNNPLGITSHSDKITFHPYYTIKDALGLLLFLLSLMTLTLFSPDLLGDPDNYTLANPLNTPPHIKPEWYFLFAYTILRSVPNKLGGVLALLLSILILAMIPILHMSKQQSMMFRPLSQSLYWLLAADLLILTWIGGQPVSYPFTIIGQVASVLYFTTILILMPTISLIENKMLKWA</sequence>
<protein>
    <recommendedName>
        <fullName>Cytochrome b</fullName>
    </recommendedName>
    <alternativeName>
        <fullName>Complex III subunit 3</fullName>
    </alternativeName>
    <alternativeName>
        <fullName>Complex III subunit III</fullName>
    </alternativeName>
    <alternativeName>
        <fullName>Cytochrome b-c1 complex subunit 3</fullName>
    </alternativeName>
    <alternativeName>
        <fullName>Ubiquinol-cytochrome-c reductase complex cytochrome b subunit</fullName>
    </alternativeName>
</protein>
<comment type="function">
    <text evidence="2">Component of the ubiquinol-cytochrome c reductase complex (complex III or cytochrome b-c1 complex) that is part of the mitochondrial respiratory chain. The b-c1 complex mediates electron transfer from ubiquinol to cytochrome c. Contributes to the generation of a proton gradient across the mitochondrial membrane that is then used for ATP synthesis.</text>
</comment>
<comment type="cofactor">
    <cofactor evidence="2">
        <name>heme b</name>
        <dbReference type="ChEBI" id="CHEBI:60344"/>
    </cofactor>
    <text evidence="2">Binds 2 heme b groups non-covalently.</text>
</comment>
<comment type="subunit">
    <text evidence="2">The cytochrome bc1 complex contains 11 subunits: 3 respiratory subunits (MT-CYB, CYC1 and UQCRFS1), 2 core proteins (UQCRC1 and UQCRC2) and 6 low-molecular weight proteins (UQCRH/QCR6, UQCRB/QCR7, UQCRQ/QCR8, UQCR10/QCR9, UQCR11/QCR10 and a cleavage product of UQCRFS1). This cytochrome bc1 complex then forms a dimer.</text>
</comment>
<comment type="subcellular location">
    <subcellularLocation>
        <location evidence="2">Mitochondrion inner membrane</location>
        <topology evidence="2">Multi-pass membrane protein</topology>
    </subcellularLocation>
</comment>
<comment type="disease">
    <text evidence="8 12">Defects in MT-CYB are a rare cause of mitochondrial dysfunction underlying different myopathies. They include mitochondrial encephalomyopathy, hypertrophic cardiomyopathy (HCM), and sporadic mitochondrial myopathy (MM). In mitochondrial myopathy, exercise intolerance is the predominant symptom. Additional features include lactic acidosis, muscle weakness and/or myoglobinuria. Defects in MTCYB are also found in cases of exercise intolerance accompanied by deafness, intellectual disability, retinitis pigmentosa, cataract, growth retardation, epilepsy (multisystem disorder).</text>
</comment>
<comment type="disease" evidence="7">
    <disease id="DI-00248">
        <name>Cardiomyopathy, infantile histiocytoid</name>
        <acronym>CMIH</acronym>
        <description>A heart disease characterized by the presence of pale granular foamy histiocyte-like cells within the myocardium. It usually affects children younger than 2 years of age, with a clear predominance of females over males. Infants present with dysrhythmia or cardiac arrest. The clinical course is usually fulminant, sometimes simulating sudden infant death syndrome.</description>
        <dbReference type="MIM" id="500000"/>
    </disease>
    <text>The disease is caused by variants affecting the gene represented in this entry.</text>
</comment>
<comment type="disease" evidence="16">
    <disease id="DI-00640">
        <name>Leber hereditary optic neuropathy</name>
        <acronym>LHON</acronym>
        <description>A maternally inherited form of Leber hereditary optic neuropathy, a mitochondrial disease resulting in bilateral painless loss of central vision due to selective degeneration of the retinal ganglion cells and their axons. The disorder shows incomplete penetrance and male predominance. Cardiac conduction defects and neurological defects have also been described in some LHON patients. LHON results from primary mitochondrial DNA mutations affecting the respiratory chain complexes.</description>
        <dbReference type="MIM" id="535000"/>
    </disease>
    <text>The disease is caused by variants affecting distinct genetic loci, including the gene represented in this entry.</text>
</comment>
<comment type="miscellaneous">
    <text evidence="1">Heme 1 (or BL or b562) is low-potential and absorbs at about 562 nm, and heme 2 (or BH or b566) is high-potential and absorbs at about 566 nm.</text>
</comment>
<comment type="similarity">
    <text evidence="3 4">Belongs to the cytochrome b family.</text>
</comment>
<comment type="caution">
    <text evidence="2">The full-length protein contains only eight transmembrane helices, not nine as predicted by bioinformatics tools.</text>
</comment>
<proteinExistence type="evidence at protein level"/>